<sequence>MGSDDQSAGDRIQKGFQINYMILRDADSGKIIWQENKDFSAPDQEHEARVPVKILDMRAVSREINFSTIESMENFRLDQKVLFKGRIMEEWFFEMGFVGANTTNTWQSTIEAAPESQMMPAKVLNGNVTIQTSFYDNETLITKSVVRLYYI</sequence>
<comment type="subunit">
    <text evidence="3">Interacts with Pde6.</text>
</comment>
<comment type="interaction">
    <interactant intactId="EBI-181752">
        <id>Q9VLJ0</id>
    </interactant>
    <interactant intactId="EBI-15113753">
        <id>Q9VD64</id>
        <label>dnd</label>
    </interactant>
    <organismsDiffer>false</organismsDiffer>
    <experiments>4</experiments>
</comment>
<comment type="subcellular location">
    <subcellularLocation>
        <location evidence="3">Nucleus</location>
    </subcellularLocation>
    <subcellularLocation>
        <location evidence="3">Cytoplasm</location>
    </subcellularLocation>
    <text>Expressed predominantly in the nucleus, with less intense staining in the cytoplasm.</text>
</comment>
<comment type="similarity">
    <text evidence="1">Belongs to the PDE6D/unc-119 family.</text>
</comment>
<accession>Q9VLJ0</accession>
<reference evidence="6" key="1">
    <citation type="journal article" date="2000" name="Science">
        <title>The genome sequence of Drosophila melanogaster.</title>
        <authorList>
            <person name="Adams M.D."/>
            <person name="Celniker S.E."/>
            <person name="Holt R.A."/>
            <person name="Evans C.A."/>
            <person name="Gocayne J.D."/>
            <person name="Amanatides P.G."/>
            <person name="Scherer S.E."/>
            <person name="Li P.W."/>
            <person name="Hoskins R.A."/>
            <person name="Galle R.F."/>
            <person name="George R.A."/>
            <person name="Lewis S.E."/>
            <person name="Richards S."/>
            <person name="Ashburner M."/>
            <person name="Henderson S.N."/>
            <person name="Sutton G.G."/>
            <person name="Wortman J.R."/>
            <person name="Yandell M.D."/>
            <person name="Zhang Q."/>
            <person name="Chen L.X."/>
            <person name="Brandon R.C."/>
            <person name="Rogers Y.-H.C."/>
            <person name="Blazej R.G."/>
            <person name="Champe M."/>
            <person name="Pfeiffer B.D."/>
            <person name="Wan K.H."/>
            <person name="Doyle C."/>
            <person name="Baxter E.G."/>
            <person name="Helt G."/>
            <person name="Nelson C.R."/>
            <person name="Miklos G.L.G."/>
            <person name="Abril J.F."/>
            <person name="Agbayani A."/>
            <person name="An H.-J."/>
            <person name="Andrews-Pfannkoch C."/>
            <person name="Baldwin D."/>
            <person name="Ballew R.M."/>
            <person name="Basu A."/>
            <person name="Baxendale J."/>
            <person name="Bayraktaroglu L."/>
            <person name="Beasley E.M."/>
            <person name="Beeson K.Y."/>
            <person name="Benos P.V."/>
            <person name="Berman B.P."/>
            <person name="Bhandari D."/>
            <person name="Bolshakov S."/>
            <person name="Borkova D."/>
            <person name="Botchan M.R."/>
            <person name="Bouck J."/>
            <person name="Brokstein P."/>
            <person name="Brottier P."/>
            <person name="Burtis K.C."/>
            <person name="Busam D.A."/>
            <person name="Butler H."/>
            <person name="Cadieu E."/>
            <person name="Center A."/>
            <person name="Chandra I."/>
            <person name="Cherry J.M."/>
            <person name="Cawley S."/>
            <person name="Dahlke C."/>
            <person name="Davenport L.B."/>
            <person name="Davies P."/>
            <person name="de Pablos B."/>
            <person name="Delcher A."/>
            <person name="Deng Z."/>
            <person name="Mays A.D."/>
            <person name="Dew I."/>
            <person name="Dietz S.M."/>
            <person name="Dodson K."/>
            <person name="Doup L.E."/>
            <person name="Downes M."/>
            <person name="Dugan-Rocha S."/>
            <person name="Dunkov B.C."/>
            <person name="Dunn P."/>
            <person name="Durbin K.J."/>
            <person name="Evangelista C.C."/>
            <person name="Ferraz C."/>
            <person name="Ferriera S."/>
            <person name="Fleischmann W."/>
            <person name="Fosler C."/>
            <person name="Gabrielian A.E."/>
            <person name="Garg N.S."/>
            <person name="Gelbart W.M."/>
            <person name="Glasser K."/>
            <person name="Glodek A."/>
            <person name="Gong F."/>
            <person name="Gorrell J.H."/>
            <person name="Gu Z."/>
            <person name="Guan P."/>
            <person name="Harris M."/>
            <person name="Harris N.L."/>
            <person name="Harvey D.A."/>
            <person name="Heiman T.J."/>
            <person name="Hernandez J.R."/>
            <person name="Houck J."/>
            <person name="Hostin D."/>
            <person name="Houston K.A."/>
            <person name="Howland T.J."/>
            <person name="Wei M.-H."/>
            <person name="Ibegwam C."/>
            <person name="Jalali M."/>
            <person name="Kalush F."/>
            <person name="Karpen G.H."/>
            <person name="Ke Z."/>
            <person name="Kennison J.A."/>
            <person name="Ketchum K.A."/>
            <person name="Kimmel B.E."/>
            <person name="Kodira C.D."/>
            <person name="Kraft C.L."/>
            <person name="Kravitz S."/>
            <person name="Kulp D."/>
            <person name="Lai Z."/>
            <person name="Lasko P."/>
            <person name="Lei Y."/>
            <person name="Levitsky A.A."/>
            <person name="Li J.H."/>
            <person name="Li Z."/>
            <person name="Liang Y."/>
            <person name="Lin X."/>
            <person name="Liu X."/>
            <person name="Mattei B."/>
            <person name="McIntosh T.C."/>
            <person name="McLeod M.P."/>
            <person name="McPherson D."/>
            <person name="Merkulov G."/>
            <person name="Milshina N.V."/>
            <person name="Mobarry C."/>
            <person name="Morris J."/>
            <person name="Moshrefi A."/>
            <person name="Mount S.M."/>
            <person name="Moy M."/>
            <person name="Murphy B."/>
            <person name="Murphy L."/>
            <person name="Muzny D.M."/>
            <person name="Nelson D.L."/>
            <person name="Nelson D.R."/>
            <person name="Nelson K.A."/>
            <person name="Nixon K."/>
            <person name="Nusskern D.R."/>
            <person name="Pacleb J.M."/>
            <person name="Palazzolo M."/>
            <person name="Pittman G.S."/>
            <person name="Pan S."/>
            <person name="Pollard J."/>
            <person name="Puri V."/>
            <person name="Reese M.G."/>
            <person name="Reinert K."/>
            <person name="Remington K."/>
            <person name="Saunders R.D.C."/>
            <person name="Scheeler F."/>
            <person name="Shen H."/>
            <person name="Shue B.C."/>
            <person name="Siden-Kiamos I."/>
            <person name="Simpson M."/>
            <person name="Skupski M.P."/>
            <person name="Smith T.J."/>
            <person name="Spier E."/>
            <person name="Spradling A.C."/>
            <person name="Stapleton M."/>
            <person name="Strong R."/>
            <person name="Sun E."/>
            <person name="Svirskas R."/>
            <person name="Tector C."/>
            <person name="Turner R."/>
            <person name="Venter E."/>
            <person name="Wang A.H."/>
            <person name="Wang X."/>
            <person name="Wang Z.-Y."/>
            <person name="Wassarman D.A."/>
            <person name="Weinstock G.M."/>
            <person name="Weissenbach J."/>
            <person name="Williams S.M."/>
            <person name="Woodage T."/>
            <person name="Worley K.C."/>
            <person name="Wu D."/>
            <person name="Yang S."/>
            <person name="Yao Q.A."/>
            <person name="Ye J."/>
            <person name="Yeh R.-F."/>
            <person name="Zaveri J.S."/>
            <person name="Zhan M."/>
            <person name="Zhang G."/>
            <person name="Zhao Q."/>
            <person name="Zheng L."/>
            <person name="Zheng X.H."/>
            <person name="Zhong F.N."/>
            <person name="Zhong W."/>
            <person name="Zhou X."/>
            <person name="Zhu S.C."/>
            <person name="Zhu X."/>
            <person name="Smith H.O."/>
            <person name="Gibbs R.A."/>
            <person name="Myers E.W."/>
            <person name="Rubin G.M."/>
            <person name="Venter J.C."/>
        </authorList>
    </citation>
    <scope>NUCLEOTIDE SEQUENCE [LARGE SCALE GENOMIC DNA]</scope>
    <source>
        <strain>Berkeley</strain>
    </source>
</reference>
<reference evidence="5 6" key="2">
    <citation type="journal article" date="2002" name="Genome Biol.">
        <title>Annotation of the Drosophila melanogaster euchromatic genome: a systematic review.</title>
        <authorList>
            <person name="Misra S."/>
            <person name="Crosby M.A."/>
            <person name="Mungall C.J."/>
            <person name="Matthews B.B."/>
            <person name="Campbell K.S."/>
            <person name="Hradecky P."/>
            <person name="Huang Y."/>
            <person name="Kaminker J.S."/>
            <person name="Millburn G.H."/>
            <person name="Prochnik S.E."/>
            <person name="Smith C.D."/>
            <person name="Tupy J.L."/>
            <person name="Whitfield E.J."/>
            <person name="Bayraktaroglu L."/>
            <person name="Berman B.P."/>
            <person name="Bettencourt B.R."/>
            <person name="Celniker S.E."/>
            <person name="de Grey A.D.N.J."/>
            <person name="Drysdale R.A."/>
            <person name="Harris N.L."/>
            <person name="Richter J."/>
            <person name="Russo S."/>
            <person name="Schroeder A.J."/>
            <person name="Shu S.Q."/>
            <person name="Stapleton M."/>
            <person name="Yamada C."/>
            <person name="Ashburner M."/>
            <person name="Gelbart W.M."/>
            <person name="Rubin G.M."/>
            <person name="Lewis S.E."/>
        </authorList>
    </citation>
    <scope>GENOME REANNOTATION</scope>
    <source>
        <strain>Berkeley</strain>
    </source>
</reference>
<reference evidence="7" key="3">
    <citation type="journal article" date="2002" name="Genome Biol.">
        <title>A Drosophila full-length cDNA resource.</title>
        <authorList>
            <person name="Stapleton M."/>
            <person name="Carlson J.W."/>
            <person name="Brokstein P."/>
            <person name="Yu C."/>
            <person name="Champe M."/>
            <person name="George R.A."/>
            <person name="Guarin H."/>
            <person name="Kronmiller B."/>
            <person name="Pacleb J.M."/>
            <person name="Park S."/>
            <person name="Wan K.H."/>
            <person name="Rubin G.M."/>
            <person name="Celniker S.E."/>
        </authorList>
    </citation>
    <scope>NUCLEOTIDE SEQUENCE [LARGE SCALE MRNA]</scope>
    <source>
        <strain evidence="8">Berkeley</strain>
        <tissue evidence="2">Embryo</tissue>
        <tissue evidence="2">Head</tissue>
    </source>
</reference>
<reference evidence="5" key="4">
    <citation type="journal article" date="2008" name="Biochem. J.">
        <title>Regulation of a Drosophila melanogaster cGMP-specific phosphodiesterase by prenylation and interaction with a prenyl-binding protein.</title>
        <authorList>
            <person name="Day J.P."/>
            <person name="Cleghon V."/>
            <person name="Houslay M.D."/>
            <person name="Davies S.-A."/>
        </authorList>
    </citation>
    <scope>INTERACTION WITH PDE6</scope>
    <scope>SUBCELLULAR LOCATION</scope>
</reference>
<protein>
    <recommendedName>
        <fullName>Probable cGMP 3',5'-cyclic phosphodiesterase subunit delta</fullName>
        <shortName evidence="4">DmPrBP</shortName>
    </recommendedName>
</protein>
<organism>
    <name type="scientific">Drosophila melanogaster</name>
    <name type="common">Fruit fly</name>
    <dbReference type="NCBI Taxonomy" id="7227"/>
    <lineage>
        <taxon>Eukaryota</taxon>
        <taxon>Metazoa</taxon>
        <taxon>Ecdysozoa</taxon>
        <taxon>Arthropoda</taxon>
        <taxon>Hexapoda</taxon>
        <taxon>Insecta</taxon>
        <taxon>Pterygota</taxon>
        <taxon>Neoptera</taxon>
        <taxon>Endopterygota</taxon>
        <taxon>Diptera</taxon>
        <taxon>Brachycera</taxon>
        <taxon>Muscomorpha</taxon>
        <taxon>Ephydroidea</taxon>
        <taxon>Drosophilidae</taxon>
        <taxon>Drosophila</taxon>
        <taxon>Sophophora</taxon>
    </lineage>
</organism>
<keyword id="KW-0140">cGMP</keyword>
<keyword id="KW-0963">Cytoplasm</keyword>
<keyword id="KW-0539">Nucleus</keyword>
<keyword id="KW-1185">Reference proteome</keyword>
<feature type="chain" id="PRO_0000358315" description="Probable cGMP 3',5'-cyclic phosphodiesterase subunit delta">
    <location>
        <begin position="1"/>
        <end position="151"/>
    </location>
</feature>
<evidence type="ECO:0000255" key="1"/>
<evidence type="ECO:0000269" key="2">
    <source>
    </source>
</evidence>
<evidence type="ECO:0000269" key="3">
    <source>
    </source>
</evidence>
<evidence type="ECO:0000303" key="4">
    <source>
    </source>
</evidence>
<evidence type="ECO:0000305" key="5"/>
<evidence type="ECO:0000312" key="6">
    <source>
        <dbReference type="EMBL" id="AAF52700.1"/>
    </source>
</evidence>
<evidence type="ECO:0000312" key="7">
    <source>
        <dbReference type="EMBL" id="AAL48589.1"/>
    </source>
</evidence>
<evidence type="ECO:0000312" key="8">
    <source>
        <dbReference type="EMBL" id="AAL49378.1"/>
    </source>
</evidence>
<dbReference type="EMBL" id="AE014134">
    <property type="protein sequence ID" value="AAF52700.1"/>
    <property type="molecule type" value="Genomic_DNA"/>
</dbReference>
<dbReference type="EMBL" id="AY070967">
    <property type="protein sequence ID" value="AAL48589.1"/>
    <property type="molecule type" value="mRNA"/>
</dbReference>
<dbReference type="EMBL" id="AY071756">
    <property type="protein sequence ID" value="AAL49378.1"/>
    <property type="molecule type" value="mRNA"/>
</dbReference>
<dbReference type="RefSeq" id="NP_609246.1">
    <property type="nucleotide sequence ID" value="NM_135402.3"/>
</dbReference>
<dbReference type="SMR" id="Q9VLJ0"/>
<dbReference type="BioGRID" id="60315">
    <property type="interactions" value="5"/>
</dbReference>
<dbReference type="FunCoup" id="Q9VLJ0">
    <property type="interactions" value="1539"/>
</dbReference>
<dbReference type="IntAct" id="Q9VLJ0">
    <property type="interactions" value="1"/>
</dbReference>
<dbReference type="STRING" id="7227.FBpp0079352"/>
<dbReference type="PaxDb" id="7227-FBpp0079352"/>
<dbReference type="DNASU" id="34196"/>
<dbReference type="EnsemblMetazoa" id="FBtr0079750">
    <property type="protein sequence ID" value="FBpp0079352"/>
    <property type="gene ID" value="FBgn0032059"/>
</dbReference>
<dbReference type="GeneID" id="34196"/>
<dbReference type="KEGG" id="dme:Dmel_CG9296"/>
<dbReference type="UCSC" id="CG9296-RA">
    <property type="organism name" value="d. melanogaster"/>
</dbReference>
<dbReference type="AGR" id="FB:FBgn0032059"/>
<dbReference type="CTD" id="34196"/>
<dbReference type="FlyBase" id="FBgn0032059">
    <property type="gene designation" value="PrBP"/>
</dbReference>
<dbReference type="VEuPathDB" id="VectorBase:FBgn0032059"/>
<dbReference type="eggNOG" id="KOG4038">
    <property type="taxonomic scope" value="Eukaryota"/>
</dbReference>
<dbReference type="GeneTree" id="ENSGT00390000000263"/>
<dbReference type="HOGENOM" id="CLU_119682_0_0_1"/>
<dbReference type="InParanoid" id="Q9VLJ0"/>
<dbReference type="OMA" id="STNTWQN"/>
<dbReference type="OrthoDB" id="10248777at2759"/>
<dbReference type="PhylomeDB" id="Q9VLJ0"/>
<dbReference type="Reactome" id="R-DME-9648002">
    <property type="pathway name" value="RAS processing"/>
</dbReference>
<dbReference type="BioGRID-ORCS" id="34196">
    <property type="hits" value="1 hit in 1 CRISPR screen"/>
</dbReference>
<dbReference type="GenomeRNAi" id="34196"/>
<dbReference type="PRO" id="PR:Q9VLJ0"/>
<dbReference type="Proteomes" id="UP000000803">
    <property type="component" value="Chromosome 2L"/>
</dbReference>
<dbReference type="Bgee" id="FBgn0032059">
    <property type="expression patterns" value="Expressed in seminal fluid secreting gland and 123 other cell types or tissues"/>
</dbReference>
<dbReference type="ExpressionAtlas" id="Q9VLJ0">
    <property type="expression patterns" value="baseline and differential"/>
</dbReference>
<dbReference type="GO" id="GO:0005737">
    <property type="term" value="C:cytoplasm"/>
    <property type="evidence" value="ECO:0000314"/>
    <property type="project" value="UniProtKB"/>
</dbReference>
<dbReference type="GO" id="GO:0005634">
    <property type="term" value="C:nucleus"/>
    <property type="evidence" value="ECO:0000314"/>
    <property type="project" value="UniProtKB"/>
</dbReference>
<dbReference type="GO" id="GO:0050953">
    <property type="term" value="P:sensory perception of light stimulus"/>
    <property type="evidence" value="ECO:0007669"/>
    <property type="project" value="InterPro"/>
</dbReference>
<dbReference type="FunFam" id="2.70.50.40:FF:000002">
    <property type="entry name" value="Retinal rod rhodopsin-sensitive cGMP 3',5'-cyclic phosphodiesterase subunit delta"/>
    <property type="match status" value="1"/>
</dbReference>
<dbReference type="Gene3D" id="2.70.50.40">
    <property type="entry name" value="GMP phosphodiesterase, delta subunit"/>
    <property type="match status" value="1"/>
</dbReference>
<dbReference type="InterPro" id="IPR014756">
    <property type="entry name" value="Ig_E-set"/>
</dbReference>
<dbReference type="InterPro" id="IPR008015">
    <property type="entry name" value="PDED_dom"/>
</dbReference>
<dbReference type="InterPro" id="IPR037036">
    <property type="entry name" value="PDED_dom_sf"/>
</dbReference>
<dbReference type="InterPro" id="IPR017287">
    <property type="entry name" value="Rhodop-sen_GMP-Pdiesterase_dsu"/>
</dbReference>
<dbReference type="PANTHER" id="PTHR12976">
    <property type="entry name" value="RETINAL ROD RHODOPSIN-SENSITIVE CGMP 3',5'-CYCLIC PHOSPHODIESTERASE DELTA-SUBUNIT"/>
    <property type="match status" value="1"/>
</dbReference>
<dbReference type="PANTHER" id="PTHR12976:SF0">
    <property type="entry name" value="RETINAL ROD RHODOPSIN-SENSITIVE CGMP 3',5'-CYCLIC PHOSPHODIESTERASE SUBUNIT DELTA"/>
    <property type="match status" value="1"/>
</dbReference>
<dbReference type="Pfam" id="PF05351">
    <property type="entry name" value="GMP_PDE_delta"/>
    <property type="match status" value="1"/>
</dbReference>
<dbReference type="PIRSF" id="PIRSF037825">
    <property type="entry name" value="GMP-Pdiesterase_delta"/>
    <property type="match status" value="1"/>
</dbReference>
<dbReference type="SUPFAM" id="SSF81296">
    <property type="entry name" value="E set domains"/>
    <property type="match status" value="1"/>
</dbReference>
<gene>
    <name evidence="4" type="primary">PrBP</name>
    <name type="ORF">CG9296</name>
</gene>
<name>PDE6D_DROME</name>
<proteinExistence type="evidence at protein level"/>